<protein>
    <recommendedName>
        <fullName evidence="1">dTTP/UTP pyrophosphatase</fullName>
        <shortName evidence="1">dTTPase/UTPase</shortName>
        <ecNumber evidence="1">3.6.1.9</ecNumber>
    </recommendedName>
    <alternativeName>
        <fullName evidence="1">Nucleoside triphosphate pyrophosphatase</fullName>
    </alternativeName>
    <alternativeName>
        <fullName evidence="1">Nucleotide pyrophosphatase</fullName>
        <shortName evidence="1">Nucleotide PPase</shortName>
    </alternativeName>
</protein>
<sequence length="200" mass="21292">MPSLYLASGSPRRRELLTQIGVSFTVLNAQIDETPFDHETPAAYVERLALGKAQAGLSVLAAEQQACVMGADTAVVLDGRILGKPADEADALAMLTALSGREHEVMTAVALSDRHRSETRIVTSRVRFRPIQPHEAQAYWASGEPADKAGGYAIQGLAAIFVEGLQGSYSGVVGLPLCETAELLGHFGIPCWQCLEGDES</sequence>
<keyword id="KW-0963">Cytoplasm</keyword>
<keyword id="KW-0378">Hydrolase</keyword>
<keyword id="KW-0546">Nucleotide metabolism</keyword>
<evidence type="ECO:0000255" key="1">
    <source>
        <dbReference type="HAMAP-Rule" id="MF_00528"/>
    </source>
</evidence>
<accession>Q48E97</accession>
<gene>
    <name type="ordered locus">PSPPH_4169</name>
</gene>
<proteinExistence type="inferred from homology"/>
<reference key="1">
    <citation type="journal article" date="2005" name="J. Bacteriol.">
        <title>Whole-genome sequence analysis of Pseudomonas syringae pv. phaseolicola 1448A reveals divergence among pathovars in genes involved in virulence and transposition.</title>
        <authorList>
            <person name="Joardar V."/>
            <person name="Lindeberg M."/>
            <person name="Jackson R.W."/>
            <person name="Selengut J."/>
            <person name="Dodson R."/>
            <person name="Brinkac L.M."/>
            <person name="Daugherty S.C."/>
            <person name="DeBoy R.T."/>
            <person name="Durkin A.S."/>
            <person name="Gwinn Giglio M."/>
            <person name="Madupu R."/>
            <person name="Nelson W.C."/>
            <person name="Rosovitz M.J."/>
            <person name="Sullivan S.A."/>
            <person name="Crabtree J."/>
            <person name="Creasy T."/>
            <person name="Davidsen T.M."/>
            <person name="Haft D.H."/>
            <person name="Zafar N."/>
            <person name="Zhou L."/>
            <person name="Halpin R."/>
            <person name="Holley T."/>
            <person name="Khouri H.M."/>
            <person name="Feldblyum T.V."/>
            <person name="White O."/>
            <person name="Fraser C.M."/>
            <person name="Chatterjee A.K."/>
            <person name="Cartinhour S."/>
            <person name="Schneider D."/>
            <person name="Mansfield J.W."/>
            <person name="Collmer A."/>
            <person name="Buell R."/>
        </authorList>
    </citation>
    <scope>NUCLEOTIDE SEQUENCE [LARGE SCALE GENOMIC DNA]</scope>
    <source>
        <strain>1448A / Race 6</strain>
    </source>
</reference>
<dbReference type="EC" id="3.6.1.9" evidence="1"/>
<dbReference type="EMBL" id="CP000058">
    <property type="protein sequence ID" value="AAZ34275.1"/>
    <property type="molecule type" value="Genomic_DNA"/>
</dbReference>
<dbReference type="RefSeq" id="WP_002555105.1">
    <property type="nucleotide sequence ID" value="NC_005773.3"/>
</dbReference>
<dbReference type="SMR" id="Q48E97"/>
<dbReference type="KEGG" id="psp:PSPPH_4169"/>
<dbReference type="eggNOG" id="COG0424">
    <property type="taxonomic scope" value="Bacteria"/>
</dbReference>
<dbReference type="HOGENOM" id="CLU_040416_2_1_6"/>
<dbReference type="Proteomes" id="UP000000551">
    <property type="component" value="Chromosome"/>
</dbReference>
<dbReference type="GO" id="GO:0005737">
    <property type="term" value="C:cytoplasm"/>
    <property type="evidence" value="ECO:0007669"/>
    <property type="project" value="UniProtKB-SubCell"/>
</dbReference>
<dbReference type="GO" id="GO:0036218">
    <property type="term" value="F:dTTP diphosphatase activity"/>
    <property type="evidence" value="ECO:0007669"/>
    <property type="project" value="RHEA"/>
</dbReference>
<dbReference type="GO" id="GO:0036221">
    <property type="term" value="F:UTP diphosphatase activity"/>
    <property type="evidence" value="ECO:0007669"/>
    <property type="project" value="RHEA"/>
</dbReference>
<dbReference type="GO" id="GO:0009117">
    <property type="term" value="P:nucleotide metabolic process"/>
    <property type="evidence" value="ECO:0007669"/>
    <property type="project" value="UniProtKB-KW"/>
</dbReference>
<dbReference type="CDD" id="cd00555">
    <property type="entry name" value="Maf"/>
    <property type="match status" value="1"/>
</dbReference>
<dbReference type="Gene3D" id="3.90.950.10">
    <property type="match status" value="1"/>
</dbReference>
<dbReference type="HAMAP" id="MF_00528">
    <property type="entry name" value="Maf"/>
    <property type="match status" value="1"/>
</dbReference>
<dbReference type="InterPro" id="IPR029001">
    <property type="entry name" value="ITPase-like_fam"/>
</dbReference>
<dbReference type="InterPro" id="IPR003697">
    <property type="entry name" value="Maf-like"/>
</dbReference>
<dbReference type="NCBIfam" id="TIGR00172">
    <property type="entry name" value="maf"/>
    <property type="match status" value="1"/>
</dbReference>
<dbReference type="PANTHER" id="PTHR43213">
    <property type="entry name" value="BIFUNCTIONAL DTTP/UTP PYROPHOSPHATASE/METHYLTRANSFERASE PROTEIN-RELATED"/>
    <property type="match status" value="1"/>
</dbReference>
<dbReference type="PANTHER" id="PTHR43213:SF5">
    <property type="entry name" value="BIFUNCTIONAL DTTP_UTP PYROPHOSPHATASE_METHYLTRANSFERASE PROTEIN-RELATED"/>
    <property type="match status" value="1"/>
</dbReference>
<dbReference type="Pfam" id="PF02545">
    <property type="entry name" value="Maf"/>
    <property type="match status" value="1"/>
</dbReference>
<dbReference type="PIRSF" id="PIRSF006305">
    <property type="entry name" value="Maf"/>
    <property type="match status" value="1"/>
</dbReference>
<dbReference type="SUPFAM" id="SSF52972">
    <property type="entry name" value="ITPase-like"/>
    <property type="match status" value="1"/>
</dbReference>
<name>NTPPA_PSE14</name>
<comment type="function">
    <text evidence="1">Nucleoside triphosphate pyrophosphatase that hydrolyzes dTTP and UTP. May have a dual role in cell division arrest and in preventing the incorporation of modified nucleotides into cellular nucleic acids.</text>
</comment>
<comment type="catalytic activity">
    <reaction evidence="1">
        <text>dTTP + H2O = dTMP + diphosphate + H(+)</text>
        <dbReference type="Rhea" id="RHEA:28534"/>
        <dbReference type="ChEBI" id="CHEBI:15377"/>
        <dbReference type="ChEBI" id="CHEBI:15378"/>
        <dbReference type="ChEBI" id="CHEBI:33019"/>
        <dbReference type="ChEBI" id="CHEBI:37568"/>
        <dbReference type="ChEBI" id="CHEBI:63528"/>
        <dbReference type="EC" id="3.6.1.9"/>
    </reaction>
</comment>
<comment type="catalytic activity">
    <reaction evidence="1">
        <text>UTP + H2O = UMP + diphosphate + H(+)</text>
        <dbReference type="Rhea" id="RHEA:29395"/>
        <dbReference type="ChEBI" id="CHEBI:15377"/>
        <dbReference type="ChEBI" id="CHEBI:15378"/>
        <dbReference type="ChEBI" id="CHEBI:33019"/>
        <dbReference type="ChEBI" id="CHEBI:46398"/>
        <dbReference type="ChEBI" id="CHEBI:57865"/>
        <dbReference type="EC" id="3.6.1.9"/>
    </reaction>
</comment>
<comment type="cofactor">
    <cofactor evidence="1">
        <name>a divalent metal cation</name>
        <dbReference type="ChEBI" id="CHEBI:60240"/>
    </cofactor>
</comment>
<comment type="subcellular location">
    <subcellularLocation>
        <location evidence="1">Cytoplasm</location>
    </subcellularLocation>
</comment>
<comment type="similarity">
    <text evidence="1">Belongs to the Maf family. YhdE subfamily.</text>
</comment>
<organism>
    <name type="scientific">Pseudomonas savastanoi pv. phaseolicola (strain 1448A / Race 6)</name>
    <name type="common">Pseudomonas syringae pv. phaseolicola (strain 1448A / Race 6)</name>
    <dbReference type="NCBI Taxonomy" id="264730"/>
    <lineage>
        <taxon>Bacteria</taxon>
        <taxon>Pseudomonadati</taxon>
        <taxon>Pseudomonadota</taxon>
        <taxon>Gammaproteobacteria</taxon>
        <taxon>Pseudomonadales</taxon>
        <taxon>Pseudomonadaceae</taxon>
        <taxon>Pseudomonas</taxon>
    </lineage>
</organism>
<feature type="chain" id="PRO_0000267383" description="dTTP/UTP pyrophosphatase">
    <location>
        <begin position="1"/>
        <end position="200"/>
    </location>
</feature>
<feature type="active site" description="Proton acceptor" evidence="1">
    <location>
        <position position="72"/>
    </location>
</feature>
<feature type="site" description="Important for substrate specificity" evidence="1">
    <location>
        <position position="12"/>
    </location>
</feature>
<feature type="site" description="Important for substrate specificity" evidence="1">
    <location>
        <position position="73"/>
    </location>
</feature>
<feature type="site" description="Important for substrate specificity" evidence="1">
    <location>
        <position position="155"/>
    </location>
</feature>